<reference key="1">
    <citation type="journal article" date="2007" name="PLoS Genet.">
        <title>Patterns and implications of gene gain and loss in the evolution of Prochlorococcus.</title>
        <authorList>
            <person name="Kettler G.C."/>
            <person name="Martiny A.C."/>
            <person name="Huang K."/>
            <person name="Zucker J."/>
            <person name="Coleman M.L."/>
            <person name="Rodrigue S."/>
            <person name="Chen F."/>
            <person name="Lapidus A."/>
            <person name="Ferriera S."/>
            <person name="Johnson J."/>
            <person name="Steglich C."/>
            <person name="Church G.M."/>
            <person name="Richardson P."/>
            <person name="Chisholm S.W."/>
        </authorList>
    </citation>
    <scope>NUCLEOTIDE SEQUENCE [LARGE SCALE GENOMIC DNA]</scope>
    <source>
        <strain>AS9601</strain>
    </source>
</reference>
<feature type="chain" id="PRO_0000327113" description="Protoheme IX farnesyltransferase">
    <location>
        <begin position="1"/>
        <end position="333"/>
    </location>
</feature>
<feature type="transmembrane region" description="Helical" evidence="1">
    <location>
        <begin position="64"/>
        <end position="84"/>
    </location>
</feature>
<feature type="transmembrane region" description="Helical" evidence="1">
    <location>
        <begin position="110"/>
        <end position="130"/>
    </location>
</feature>
<feature type="transmembrane region" description="Helical" evidence="1">
    <location>
        <begin position="133"/>
        <end position="153"/>
    </location>
</feature>
<feature type="transmembrane region" description="Helical" evidence="1">
    <location>
        <begin position="161"/>
        <end position="181"/>
    </location>
</feature>
<feature type="transmembrane region" description="Helical" evidence="1">
    <location>
        <begin position="189"/>
        <end position="209"/>
    </location>
</feature>
<feature type="transmembrane region" description="Helical" evidence="1">
    <location>
        <begin position="246"/>
        <end position="266"/>
    </location>
</feature>
<feature type="transmembrane region" description="Helical" evidence="1">
    <location>
        <begin position="287"/>
        <end position="307"/>
    </location>
</feature>
<sequence>MNSSNLENLNYKSSIRDEVVPSRKKLTLPPWLEVAKPRLIPLLLATTLGGMALTEEWPLSSPKLICTLGGGALAAAAAGALNCLWEMELDKRMTRTSKRALPAGKLSSETVFLAAVSCTLAASMLLVSGVNYLAAGLTLLGLFSYVILYTVILKPRTTKNIVFGGVAGAIPPLVGASAATGHVGLSGWWLFGLVMLWTPAHFWALAILLKDDYASVGIPMLPSVKGSVFTAKAISRYGWATVLMSIMGVFALPEGGLLYGIMLLPFNGRLLQLINELKKSPDDLSRAKSLFRWSILYMFGICLLLLISRTQLSVEFEQQSMQIFLSIVSLLSN</sequence>
<proteinExistence type="inferred from homology"/>
<organism>
    <name type="scientific">Prochlorococcus marinus (strain AS9601)</name>
    <dbReference type="NCBI Taxonomy" id="146891"/>
    <lineage>
        <taxon>Bacteria</taxon>
        <taxon>Bacillati</taxon>
        <taxon>Cyanobacteriota</taxon>
        <taxon>Cyanophyceae</taxon>
        <taxon>Synechococcales</taxon>
        <taxon>Prochlorococcaceae</taxon>
        <taxon>Prochlorococcus</taxon>
    </lineage>
</organism>
<keyword id="KW-0997">Cell inner membrane</keyword>
<keyword id="KW-1003">Cell membrane</keyword>
<keyword id="KW-0350">Heme biosynthesis</keyword>
<keyword id="KW-0472">Membrane</keyword>
<keyword id="KW-0808">Transferase</keyword>
<keyword id="KW-0812">Transmembrane</keyword>
<keyword id="KW-1133">Transmembrane helix</keyword>
<comment type="function">
    <text evidence="1">Converts heme B (protoheme IX) to heme O by substitution of the vinyl group on carbon 2 of heme B porphyrin ring with a hydroxyethyl farnesyl side group.</text>
</comment>
<comment type="catalytic activity">
    <reaction evidence="1">
        <text>heme b + (2E,6E)-farnesyl diphosphate + H2O = Fe(II)-heme o + diphosphate</text>
        <dbReference type="Rhea" id="RHEA:28070"/>
        <dbReference type="ChEBI" id="CHEBI:15377"/>
        <dbReference type="ChEBI" id="CHEBI:33019"/>
        <dbReference type="ChEBI" id="CHEBI:60344"/>
        <dbReference type="ChEBI" id="CHEBI:60530"/>
        <dbReference type="ChEBI" id="CHEBI:175763"/>
        <dbReference type="EC" id="2.5.1.141"/>
    </reaction>
</comment>
<comment type="pathway">
    <text evidence="1">Porphyrin-containing compound metabolism; heme O biosynthesis; heme O from protoheme: step 1/1.</text>
</comment>
<comment type="subcellular location">
    <subcellularLocation>
        <location evidence="1">Cell inner membrane</location>
        <topology evidence="1">Multi-pass membrane protein</topology>
    </subcellularLocation>
</comment>
<comment type="miscellaneous">
    <text evidence="1">Carbon 2 of the heme B porphyrin ring is defined according to the Fischer nomenclature.</text>
</comment>
<comment type="similarity">
    <text evidence="1">Belongs to the UbiA prenyltransferase family. Protoheme IX farnesyltransferase subfamily.</text>
</comment>
<name>COXX_PROMS</name>
<protein>
    <recommendedName>
        <fullName evidence="1">Protoheme IX farnesyltransferase</fullName>
        <ecNumber evidence="1">2.5.1.141</ecNumber>
    </recommendedName>
    <alternativeName>
        <fullName evidence="1">Heme B farnesyltransferase</fullName>
    </alternativeName>
    <alternativeName>
        <fullName evidence="1">Heme O synthase</fullName>
    </alternativeName>
</protein>
<evidence type="ECO:0000255" key="1">
    <source>
        <dbReference type="HAMAP-Rule" id="MF_00154"/>
    </source>
</evidence>
<dbReference type="EC" id="2.5.1.141" evidence="1"/>
<dbReference type="EMBL" id="CP000551">
    <property type="protein sequence ID" value="ABM69791.1"/>
    <property type="molecule type" value="Genomic_DNA"/>
</dbReference>
<dbReference type="RefSeq" id="WP_011817959.1">
    <property type="nucleotide sequence ID" value="NC_008816.1"/>
</dbReference>
<dbReference type="SMR" id="A2BPT0"/>
<dbReference type="STRING" id="146891.A9601_05031"/>
<dbReference type="KEGG" id="pmb:A9601_05031"/>
<dbReference type="eggNOG" id="COG0109">
    <property type="taxonomic scope" value="Bacteria"/>
</dbReference>
<dbReference type="HOGENOM" id="CLU_029631_0_2_3"/>
<dbReference type="OrthoDB" id="9814417at2"/>
<dbReference type="UniPathway" id="UPA00834">
    <property type="reaction ID" value="UER00712"/>
</dbReference>
<dbReference type="Proteomes" id="UP000002590">
    <property type="component" value="Chromosome"/>
</dbReference>
<dbReference type="GO" id="GO:0005886">
    <property type="term" value="C:plasma membrane"/>
    <property type="evidence" value="ECO:0007669"/>
    <property type="project" value="UniProtKB-SubCell"/>
</dbReference>
<dbReference type="GO" id="GO:0008495">
    <property type="term" value="F:protoheme IX farnesyltransferase activity"/>
    <property type="evidence" value="ECO:0007669"/>
    <property type="project" value="UniProtKB-UniRule"/>
</dbReference>
<dbReference type="GO" id="GO:0048034">
    <property type="term" value="P:heme O biosynthetic process"/>
    <property type="evidence" value="ECO:0007669"/>
    <property type="project" value="UniProtKB-UniRule"/>
</dbReference>
<dbReference type="CDD" id="cd13957">
    <property type="entry name" value="PT_UbiA_Cox10"/>
    <property type="match status" value="1"/>
</dbReference>
<dbReference type="Gene3D" id="1.10.357.140">
    <property type="entry name" value="UbiA prenyltransferase"/>
    <property type="match status" value="1"/>
</dbReference>
<dbReference type="HAMAP" id="MF_00154">
    <property type="entry name" value="CyoE_CtaB"/>
    <property type="match status" value="1"/>
</dbReference>
<dbReference type="InterPro" id="IPR006369">
    <property type="entry name" value="Protohaem_IX_farnesylTrfase"/>
</dbReference>
<dbReference type="InterPro" id="IPR000537">
    <property type="entry name" value="UbiA_prenyltransferase"/>
</dbReference>
<dbReference type="InterPro" id="IPR030470">
    <property type="entry name" value="UbiA_prenylTrfase_CS"/>
</dbReference>
<dbReference type="InterPro" id="IPR044878">
    <property type="entry name" value="UbiA_sf"/>
</dbReference>
<dbReference type="NCBIfam" id="TIGR01473">
    <property type="entry name" value="cyoE_ctaB"/>
    <property type="match status" value="1"/>
</dbReference>
<dbReference type="NCBIfam" id="NF003349">
    <property type="entry name" value="PRK04375.1-2"/>
    <property type="match status" value="1"/>
</dbReference>
<dbReference type="PANTHER" id="PTHR43448:SF7">
    <property type="entry name" value="4-HYDROXYBENZOATE SOLANESYLTRANSFERASE"/>
    <property type="match status" value="1"/>
</dbReference>
<dbReference type="PANTHER" id="PTHR43448">
    <property type="entry name" value="PROTOHEME IX FARNESYLTRANSFERASE, MITOCHONDRIAL"/>
    <property type="match status" value="1"/>
</dbReference>
<dbReference type="Pfam" id="PF01040">
    <property type="entry name" value="UbiA"/>
    <property type="match status" value="1"/>
</dbReference>
<dbReference type="PROSITE" id="PS00943">
    <property type="entry name" value="UBIA"/>
    <property type="match status" value="1"/>
</dbReference>
<gene>
    <name evidence="1" type="primary">ctaB</name>
    <name type="ordered locus">A9601_05031</name>
</gene>
<accession>A2BPT0</accession>